<proteinExistence type="uncertain"/>
<dbReference type="EMBL" id="U18778">
    <property type="status" value="NOT_ANNOTATED_CDS"/>
    <property type="molecule type" value="Genomic_DNA"/>
</dbReference>
<dbReference type="EMBL" id="AF479946">
    <property type="protein sequence ID" value="AAL79259.1"/>
    <property type="molecule type" value="Genomic_DNA"/>
</dbReference>
<dbReference type="PaxDb" id="4932-YER023C-A"/>
<dbReference type="EnsemblFungi" id="YER023C-A_mRNA">
    <property type="protein sequence ID" value="YER023C-A"/>
    <property type="gene ID" value="YER023C-A"/>
</dbReference>
<dbReference type="AGR" id="SGD:S000028622"/>
<dbReference type="SGD" id="S000028622">
    <property type="gene designation" value="YER023C-A"/>
</dbReference>
<dbReference type="HOGENOM" id="CLU_2759746_0_0_1"/>
<organism>
    <name type="scientific">Saccharomyces cerevisiae (strain ATCC 204508 / S288c)</name>
    <name type="common">Baker's yeast</name>
    <dbReference type="NCBI Taxonomy" id="559292"/>
    <lineage>
        <taxon>Eukaryota</taxon>
        <taxon>Fungi</taxon>
        <taxon>Dikarya</taxon>
        <taxon>Ascomycota</taxon>
        <taxon>Saccharomycotina</taxon>
        <taxon>Saccharomycetes</taxon>
        <taxon>Saccharomycetales</taxon>
        <taxon>Saccharomycetaceae</taxon>
        <taxon>Saccharomyces</taxon>
    </lineage>
</organism>
<feature type="chain" id="PRO_0000299911" description="Putative uncharacterized protein YER023C-A">
    <location>
        <begin position="1"/>
        <end position="70"/>
    </location>
</feature>
<evidence type="ECO:0000305" key="1"/>
<evidence type="ECO:0000305" key="2">
    <source>
    </source>
</evidence>
<gene>
    <name type="ordered locus">YER023C-A</name>
</gene>
<protein>
    <recommendedName>
        <fullName>Putative uncharacterized protein YER023C-A</fullName>
    </recommendedName>
</protein>
<comment type="miscellaneous">
    <text evidence="1">Completely overlaps PRO3.</text>
</comment>
<comment type="caution">
    <text evidence="2">Product of a dubious gene prediction unlikely to encode a functional protein. Because of that it is not part of the S.cerevisiae S288c complete/reference proteome set.</text>
</comment>
<name>YE023_YEAST</name>
<sequence>MAHSLLSCNGIPNFNPLSIKDSNIKRTKAGPEPTKAVAASMFFSGSSTYLPTWLINSLTSGFCSLETSAE</sequence>
<accession>Q8TGP2</accession>
<reference key="1">
    <citation type="journal article" date="1997" name="Nature">
        <title>The nucleotide sequence of Saccharomyces cerevisiae chromosome V.</title>
        <authorList>
            <person name="Dietrich F.S."/>
            <person name="Mulligan J.T."/>
            <person name="Hennessy K.M."/>
            <person name="Yelton M.A."/>
            <person name="Allen E."/>
            <person name="Araujo R."/>
            <person name="Aviles E."/>
            <person name="Berno A."/>
            <person name="Brennan T."/>
            <person name="Carpenter J."/>
            <person name="Chen E."/>
            <person name="Cherry J.M."/>
            <person name="Chung E."/>
            <person name="Duncan M."/>
            <person name="Guzman E."/>
            <person name="Hartzell G."/>
            <person name="Hunicke-Smith S."/>
            <person name="Hyman R.W."/>
            <person name="Kayser A."/>
            <person name="Komp C."/>
            <person name="Lashkari D."/>
            <person name="Lew H."/>
            <person name="Lin D."/>
            <person name="Mosedale D."/>
            <person name="Nakahara K."/>
            <person name="Namath A."/>
            <person name="Norgren R."/>
            <person name="Oefner P."/>
            <person name="Oh C."/>
            <person name="Petel F.X."/>
            <person name="Roberts D."/>
            <person name="Sehl P."/>
            <person name="Schramm S."/>
            <person name="Shogren T."/>
            <person name="Smith V."/>
            <person name="Taylor P."/>
            <person name="Wei Y."/>
            <person name="Botstein D."/>
            <person name="Davis R.W."/>
        </authorList>
    </citation>
    <scope>NUCLEOTIDE SEQUENCE [LARGE SCALE GENOMIC DNA]</scope>
    <source>
        <strain>ATCC 204508 / S288c</strain>
    </source>
</reference>
<reference key="2">
    <citation type="journal article" date="2014" name="G3 (Bethesda)">
        <title>The reference genome sequence of Saccharomyces cerevisiae: Then and now.</title>
        <authorList>
            <person name="Engel S.R."/>
            <person name="Dietrich F.S."/>
            <person name="Fisk D.G."/>
            <person name="Binkley G."/>
            <person name="Balakrishnan R."/>
            <person name="Costanzo M.C."/>
            <person name="Dwight S.S."/>
            <person name="Hitz B.C."/>
            <person name="Karra K."/>
            <person name="Nash R.S."/>
            <person name="Weng S."/>
            <person name="Wong E.D."/>
            <person name="Lloyd P."/>
            <person name="Skrzypek M.S."/>
            <person name="Miyasato S.R."/>
            <person name="Simison M."/>
            <person name="Cherry J.M."/>
        </authorList>
    </citation>
    <scope>GENOME REANNOTATION</scope>
    <source>
        <strain>ATCC 204508 / S288c</strain>
    </source>
</reference>
<reference key="3">
    <citation type="journal article" date="2002" name="Nat. Biotechnol.">
        <title>An integrated approach for finding overlooked genes in yeast.</title>
        <authorList>
            <person name="Kumar A."/>
            <person name="Harrison P.M."/>
            <person name="Cheung K.-H."/>
            <person name="Lan N."/>
            <person name="Echols N."/>
            <person name="Bertone P."/>
            <person name="Miller P."/>
            <person name="Gerstein M.B."/>
            <person name="Snyder M."/>
        </authorList>
    </citation>
    <scope>NUCLEOTIDE SEQUENCE [GENOMIC DNA]</scope>
</reference>